<keyword id="KW-0067">ATP-binding</keyword>
<keyword id="KW-0235">DNA replication</keyword>
<keyword id="KW-0547">Nucleotide-binding</keyword>
<keyword id="KW-1185">Reference proteome</keyword>
<accession>Q8TUR2</accession>
<protein>
    <recommendedName>
        <fullName evidence="1">ORC1-type DNA replication protein 1</fullName>
    </recommendedName>
</protein>
<proteinExistence type="inferred from homology"/>
<evidence type="ECO:0000255" key="1">
    <source>
        <dbReference type="HAMAP-Rule" id="MF_01407"/>
    </source>
</evidence>
<evidence type="ECO:0000305" key="2"/>
<comment type="function">
    <text evidence="1">Involved in regulation of DNA replication.</text>
</comment>
<comment type="similarity">
    <text evidence="1">Belongs to the CDC6/cdc18 family.</text>
</comment>
<comment type="sequence caution" evidence="2">
    <conflict type="erroneous initiation">
        <sequence resource="EMBL-CDS" id="AAM03455"/>
    </conflict>
    <text>Extended N-terminus.</text>
</comment>
<gene>
    <name type="primary">cdc6-1</name>
    <name type="ordered locus">MA_0001</name>
</gene>
<feature type="chain" id="PRO_0000151002" description="ORC1-type DNA replication protein 1">
    <location>
        <begin position="1"/>
        <end position="414"/>
    </location>
</feature>
<feature type="binding site" evidence="1">
    <location>
        <begin position="70"/>
        <end position="74"/>
    </location>
    <ligand>
        <name>ATP</name>
        <dbReference type="ChEBI" id="CHEBI:30616"/>
    </ligand>
</feature>
<feature type="binding site" evidence="1">
    <location>
        <position position="213"/>
    </location>
    <ligand>
        <name>ATP</name>
        <dbReference type="ChEBI" id="CHEBI:30616"/>
    </ligand>
</feature>
<feature type="binding site" evidence="1">
    <location>
        <position position="225"/>
    </location>
    <ligand>
        <name>ATP</name>
        <dbReference type="ChEBI" id="CHEBI:30616"/>
    </ligand>
</feature>
<dbReference type="EMBL" id="AE010299">
    <property type="protein sequence ID" value="AAM03455.1"/>
    <property type="status" value="ALT_INIT"/>
    <property type="molecule type" value="Genomic_DNA"/>
</dbReference>
<dbReference type="RefSeq" id="WP_048064787.1">
    <property type="nucleotide sequence ID" value="NC_003552.1"/>
</dbReference>
<dbReference type="SMR" id="Q8TUR2"/>
<dbReference type="STRING" id="188937.MA_0001"/>
<dbReference type="EnsemblBacteria" id="AAM03455">
    <property type="protein sequence ID" value="AAM03455"/>
    <property type="gene ID" value="MA_0001"/>
</dbReference>
<dbReference type="GeneID" id="1471893"/>
<dbReference type="KEGG" id="mac:MA_0001"/>
<dbReference type="HOGENOM" id="CLU_025112_3_1_2"/>
<dbReference type="InParanoid" id="Q8TUR2"/>
<dbReference type="OrthoDB" id="195574at2157"/>
<dbReference type="PhylomeDB" id="Q8TUR2"/>
<dbReference type="Proteomes" id="UP000002487">
    <property type="component" value="Chromosome"/>
</dbReference>
<dbReference type="GO" id="GO:0005524">
    <property type="term" value="F:ATP binding"/>
    <property type="evidence" value="ECO:0007669"/>
    <property type="project" value="UniProtKB-UniRule"/>
</dbReference>
<dbReference type="GO" id="GO:0016887">
    <property type="term" value="F:ATP hydrolysis activity"/>
    <property type="evidence" value="ECO:0007669"/>
    <property type="project" value="InterPro"/>
</dbReference>
<dbReference type="GO" id="GO:0006260">
    <property type="term" value="P:DNA replication"/>
    <property type="evidence" value="ECO:0007669"/>
    <property type="project" value="UniProtKB-UniRule"/>
</dbReference>
<dbReference type="CDD" id="cd00009">
    <property type="entry name" value="AAA"/>
    <property type="match status" value="1"/>
</dbReference>
<dbReference type="CDD" id="cd08768">
    <property type="entry name" value="Cdc6_C"/>
    <property type="match status" value="1"/>
</dbReference>
<dbReference type="FunFam" id="1.10.10.10:FF:000502">
    <property type="entry name" value="ORC1-type DNA replication protein"/>
    <property type="match status" value="1"/>
</dbReference>
<dbReference type="FunFam" id="1.10.8.60:FF:000073">
    <property type="entry name" value="ORC1-type DNA replication protein"/>
    <property type="match status" value="1"/>
</dbReference>
<dbReference type="FunFam" id="3.40.50.300:FF:000930">
    <property type="entry name" value="ORC1-type DNA replication protein"/>
    <property type="match status" value="1"/>
</dbReference>
<dbReference type="Gene3D" id="1.10.8.60">
    <property type="match status" value="1"/>
</dbReference>
<dbReference type="Gene3D" id="3.40.50.300">
    <property type="entry name" value="P-loop containing nucleotide triphosphate hydrolases"/>
    <property type="match status" value="1"/>
</dbReference>
<dbReference type="Gene3D" id="1.10.10.10">
    <property type="entry name" value="Winged helix-like DNA-binding domain superfamily/Winged helix DNA-binding domain"/>
    <property type="match status" value="1"/>
</dbReference>
<dbReference type="HAMAP" id="MF_01407">
    <property type="entry name" value="ORC1_type_DNA_replic_protein"/>
    <property type="match status" value="1"/>
</dbReference>
<dbReference type="InterPro" id="IPR003593">
    <property type="entry name" value="AAA+_ATPase"/>
</dbReference>
<dbReference type="InterPro" id="IPR049945">
    <property type="entry name" value="AAA_22"/>
</dbReference>
<dbReference type="InterPro" id="IPR015163">
    <property type="entry name" value="Cdc6_C"/>
</dbReference>
<dbReference type="InterPro" id="IPR055237">
    <property type="entry name" value="Cdc6_lid"/>
</dbReference>
<dbReference type="InterPro" id="IPR050311">
    <property type="entry name" value="ORC1/CDC6"/>
</dbReference>
<dbReference type="InterPro" id="IPR014277">
    <property type="entry name" value="Orc1/Cdc6_arc"/>
</dbReference>
<dbReference type="InterPro" id="IPR027417">
    <property type="entry name" value="P-loop_NTPase"/>
</dbReference>
<dbReference type="InterPro" id="IPR036388">
    <property type="entry name" value="WH-like_DNA-bd_sf"/>
</dbReference>
<dbReference type="InterPro" id="IPR036390">
    <property type="entry name" value="WH_DNA-bd_sf"/>
</dbReference>
<dbReference type="NCBIfam" id="TIGR02928">
    <property type="entry name" value="orc1/cdc6 family replication initiation protein"/>
    <property type="match status" value="1"/>
</dbReference>
<dbReference type="NCBIfam" id="NF001625">
    <property type="entry name" value="PRK00411.1-3"/>
    <property type="match status" value="1"/>
</dbReference>
<dbReference type="PANTHER" id="PTHR10763">
    <property type="entry name" value="CELL DIVISION CONTROL PROTEIN 6-RELATED"/>
    <property type="match status" value="1"/>
</dbReference>
<dbReference type="PANTHER" id="PTHR10763:SF22">
    <property type="entry name" value="ORC1-TYPE DNA REPLICATION PROTEIN"/>
    <property type="match status" value="1"/>
</dbReference>
<dbReference type="Pfam" id="PF13401">
    <property type="entry name" value="AAA_22"/>
    <property type="match status" value="1"/>
</dbReference>
<dbReference type="Pfam" id="PF09079">
    <property type="entry name" value="Cdc6_C"/>
    <property type="match status" value="1"/>
</dbReference>
<dbReference type="Pfam" id="PF22703">
    <property type="entry name" value="Cdc6_lid"/>
    <property type="match status" value="1"/>
</dbReference>
<dbReference type="SMART" id="SM00382">
    <property type="entry name" value="AAA"/>
    <property type="match status" value="1"/>
</dbReference>
<dbReference type="SMART" id="SM01074">
    <property type="entry name" value="Cdc6_C"/>
    <property type="match status" value="1"/>
</dbReference>
<dbReference type="SUPFAM" id="SSF52540">
    <property type="entry name" value="P-loop containing nucleoside triphosphate hydrolases"/>
    <property type="match status" value="1"/>
</dbReference>
<dbReference type="SUPFAM" id="SSF46785">
    <property type="entry name" value="Winged helix' DNA-binding domain"/>
    <property type="match status" value="1"/>
</dbReference>
<sequence length="414" mass="47122">MIKAQSLDGLFEKLLDGKSIFKNKEVLRPSYTPDLLLHRNEQINSLATILVSALRGETPSNVLIYGKTGTGKTAVTRYVGKELERVSEDKSLFCSVVYINCEVIDTQYRLLANLARHFEEEVPMTGWPTDQVFMKFKEAIDARDQVIIIILDEIDKLIKKGDDVLYNLSRINTDLRKAKVSMIGVSNDLKFTEFLDPRVKSSLGEEELIFPPYDAEQISDILKQRAKMAYNDGVLGEMVIPLCAAFAAQEHGDARRALDLLRVSGEIAERENQPQVLEEHVRRAQEKIEIDRVVEVVRTLPTQSKLVLYSIILLRSRGREGKNVTTGEMYNVYRQLCHHIDVDILTQRRVTDLMSELDMLGIVNAVVVSKGRYGRTKEISLSVPVENTRKVLLEDYRLKPLVDFKTAVFNKMFS</sequence>
<reference key="1">
    <citation type="journal article" date="2002" name="Genome Res.">
        <title>The genome of Methanosarcina acetivorans reveals extensive metabolic and physiological diversity.</title>
        <authorList>
            <person name="Galagan J.E."/>
            <person name="Nusbaum C."/>
            <person name="Roy A."/>
            <person name="Endrizzi M.G."/>
            <person name="Macdonald P."/>
            <person name="FitzHugh W."/>
            <person name="Calvo S."/>
            <person name="Engels R."/>
            <person name="Smirnov S."/>
            <person name="Atnoor D."/>
            <person name="Brown A."/>
            <person name="Allen N."/>
            <person name="Naylor J."/>
            <person name="Stange-Thomann N."/>
            <person name="DeArellano K."/>
            <person name="Johnson R."/>
            <person name="Linton L."/>
            <person name="McEwan P."/>
            <person name="McKernan K."/>
            <person name="Talamas J."/>
            <person name="Tirrell A."/>
            <person name="Ye W."/>
            <person name="Zimmer A."/>
            <person name="Barber R.D."/>
            <person name="Cann I."/>
            <person name="Graham D.E."/>
            <person name="Grahame D.A."/>
            <person name="Guss A.M."/>
            <person name="Hedderich R."/>
            <person name="Ingram-Smith C."/>
            <person name="Kuettner H.C."/>
            <person name="Krzycki J.A."/>
            <person name="Leigh J.A."/>
            <person name="Li W."/>
            <person name="Liu J."/>
            <person name="Mukhopadhyay B."/>
            <person name="Reeve J.N."/>
            <person name="Smith K."/>
            <person name="Springer T.A."/>
            <person name="Umayam L.A."/>
            <person name="White O."/>
            <person name="White R.H."/>
            <person name="de Macario E.C."/>
            <person name="Ferry J.G."/>
            <person name="Jarrell K.F."/>
            <person name="Jing H."/>
            <person name="Macario A.J.L."/>
            <person name="Paulsen I.T."/>
            <person name="Pritchett M."/>
            <person name="Sowers K.R."/>
            <person name="Swanson R.V."/>
            <person name="Zinder S.H."/>
            <person name="Lander E."/>
            <person name="Metcalf W.W."/>
            <person name="Birren B."/>
        </authorList>
    </citation>
    <scope>NUCLEOTIDE SEQUENCE [LARGE SCALE GENOMIC DNA]</scope>
    <source>
        <strain>ATCC 35395 / DSM 2834 / JCM 12185 / C2A</strain>
    </source>
</reference>
<name>CDC61_METAC</name>
<organism>
    <name type="scientific">Methanosarcina acetivorans (strain ATCC 35395 / DSM 2834 / JCM 12185 / C2A)</name>
    <dbReference type="NCBI Taxonomy" id="188937"/>
    <lineage>
        <taxon>Archaea</taxon>
        <taxon>Methanobacteriati</taxon>
        <taxon>Methanobacteriota</taxon>
        <taxon>Stenosarchaea group</taxon>
        <taxon>Methanomicrobia</taxon>
        <taxon>Methanosarcinales</taxon>
        <taxon>Methanosarcinaceae</taxon>
        <taxon>Methanosarcina</taxon>
    </lineage>
</organism>